<keyword id="KW-0961">Cell wall biogenesis/degradation</keyword>
<keyword id="KW-0963">Cytoplasm</keyword>
<keyword id="KW-0596">Phosphopantetheine</keyword>
<keyword id="KW-0597">Phosphoprotein</keyword>
<keyword id="KW-1185">Reference proteome</keyword>
<gene>
    <name evidence="1" type="primary">dltC</name>
    <name type="ordered locus">Sca_0536</name>
</gene>
<accession>B9DIY6</accession>
<comment type="function">
    <text evidence="1">Carrier protein involved in the D-alanylation of lipoteichoic acid (LTA). The loading of thioester-linked D-alanine onto DltC is catalyzed by D-alanine--D-alanyl carrier protein ligase DltA. The DltC-carried D-alanyl group is further transferred to cell membrane phosphatidylglycerol (PG) by forming an ester bond, probably catalyzed by DltD. D-alanylation of LTA plays an important role in modulating the properties of the cell wall in Gram-positive bacteria, influencing the net charge of the cell wall.</text>
</comment>
<comment type="pathway">
    <text evidence="1">Cell wall biogenesis; lipoteichoic acid biosynthesis.</text>
</comment>
<comment type="subcellular location">
    <subcellularLocation>
        <location evidence="1">Cytoplasm</location>
    </subcellularLocation>
</comment>
<comment type="PTM">
    <text evidence="1">4'-phosphopantetheine is transferred from CoA to a specific serine of apo-DCP.</text>
</comment>
<comment type="similarity">
    <text evidence="1">Belongs to the DltC family.</text>
</comment>
<dbReference type="EMBL" id="AM295250">
    <property type="protein sequence ID" value="CAL27450.1"/>
    <property type="molecule type" value="Genomic_DNA"/>
</dbReference>
<dbReference type="RefSeq" id="WP_015899794.1">
    <property type="nucleotide sequence ID" value="NC_012121.1"/>
</dbReference>
<dbReference type="SMR" id="B9DIY6"/>
<dbReference type="GeneID" id="93795475"/>
<dbReference type="KEGG" id="sca:SCA_0536"/>
<dbReference type="eggNOG" id="COG0236">
    <property type="taxonomic scope" value="Bacteria"/>
</dbReference>
<dbReference type="HOGENOM" id="CLU_108696_19_0_9"/>
<dbReference type="OrthoDB" id="6462171at2"/>
<dbReference type="BioCyc" id="SCAR396513:SCA_RS02745-MONOMER"/>
<dbReference type="UniPathway" id="UPA00556"/>
<dbReference type="Proteomes" id="UP000000444">
    <property type="component" value="Chromosome"/>
</dbReference>
<dbReference type="GO" id="GO:0005737">
    <property type="term" value="C:cytoplasm"/>
    <property type="evidence" value="ECO:0007669"/>
    <property type="project" value="UniProtKB-SubCell"/>
</dbReference>
<dbReference type="GO" id="GO:0036370">
    <property type="term" value="F:D-alanyl carrier activity"/>
    <property type="evidence" value="ECO:0007669"/>
    <property type="project" value="UniProtKB-UniRule"/>
</dbReference>
<dbReference type="GO" id="GO:0071555">
    <property type="term" value="P:cell wall organization"/>
    <property type="evidence" value="ECO:0007669"/>
    <property type="project" value="UniProtKB-KW"/>
</dbReference>
<dbReference type="GO" id="GO:0070395">
    <property type="term" value="P:lipoteichoic acid biosynthetic process"/>
    <property type="evidence" value="ECO:0007669"/>
    <property type="project" value="UniProtKB-UniRule"/>
</dbReference>
<dbReference type="Gene3D" id="1.10.1200.10">
    <property type="entry name" value="ACP-like"/>
    <property type="match status" value="1"/>
</dbReference>
<dbReference type="HAMAP" id="MF_00565">
    <property type="entry name" value="DltC"/>
    <property type="match status" value="1"/>
</dbReference>
<dbReference type="InterPro" id="IPR036736">
    <property type="entry name" value="ACP-like_sf"/>
</dbReference>
<dbReference type="InterPro" id="IPR003230">
    <property type="entry name" value="DltC"/>
</dbReference>
<dbReference type="InterPro" id="IPR009081">
    <property type="entry name" value="PP-bd_ACP"/>
</dbReference>
<dbReference type="NCBIfam" id="TIGR01688">
    <property type="entry name" value="dltC"/>
    <property type="match status" value="1"/>
</dbReference>
<dbReference type="NCBIfam" id="NF003464">
    <property type="entry name" value="PRK05087.1"/>
    <property type="match status" value="1"/>
</dbReference>
<dbReference type="Pfam" id="PF00550">
    <property type="entry name" value="PP-binding"/>
    <property type="match status" value="1"/>
</dbReference>
<dbReference type="SUPFAM" id="SSF47336">
    <property type="entry name" value="ACP-like"/>
    <property type="match status" value="1"/>
</dbReference>
<dbReference type="PROSITE" id="PS50075">
    <property type="entry name" value="CARRIER"/>
    <property type="match status" value="1"/>
</dbReference>
<protein>
    <recommendedName>
        <fullName evidence="1">D-alanyl carrier protein</fullName>
        <shortName evidence="1">DCP</shortName>
    </recommendedName>
    <alternativeName>
        <fullName evidence="1">D-alanine--poly(phosphoribitol) ligase subunit 2</fullName>
    </alternativeName>
</protein>
<organism>
    <name type="scientific">Staphylococcus carnosus (strain TM300)</name>
    <dbReference type="NCBI Taxonomy" id="396513"/>
    <lineage>
        <taxon>Bacteria</taxon>
        <taxon>Bacillati</taxon>
        <taxon>Bacillota</taxon>
        <taxon>Bacilli</taxon>
        <taxon>Bacillales</taxon>
        <taxon>Staphylococcaceae</taxon>
        <taxon>Staphylococcus</taxon>
    </lineage>
</organism>
<sequence length="78" mass="8964">MEFREQVLDLLAEVAENDVVKENPDVEIFEEGIIDSFQTVGLLLEIQNKLGIEVSIMDFDRDEWATPNKIVEALEELK</sequence>
<evidence type="ECO:0000255" key="1">
    <source>
        <dbReference type="HAMAP-Rule" id="MF_00565"/>
    </source>
</evidence>
<proteinExistence type="inferred from homology"/>
<feature type="chain" id="PRO_1000146795" description="D-alanyl carrier protein">
    <location>
        <begin position="1"/>
        <end position="78"/>
    </location>
</feature>
<feature type="domain" description="Carrier" evidence="1">
    <location>
        <begin position="1"/>
        <end position="78"/>
    </location>
</feature>
<feature type="modified residue" description="O-(pantetheine 4'-phosphoryl)serine" evidence="1">
    <location>
        <position position="36"/>
    </location>
</feature>
<reference key="1">
    <citation type="journal article" date="2009" name="Appl. Environ. Microbiol.">
        <title>Genome analysis of the meat starter culture bacterium Staphylococcus carnosus TM300.</title>
        <authorList>
            <person name="Rosenstein R."/>
            <person name="Nerz C."/>
            <person name="Biswas L."/>
            <person name="Resch A."/>
            <person name="Raddatz G."/>
            <person name="Schuster S.C."/>
            <person name="Goetz F."/>
        </authorList>
    </citation>
    <scope>NUCLEOTIDE SEQUENCE [LARGE SCALE GENOMIC DNA]</scope>
    <source>
        <strain>TM300</strain>
    </source>
</reference>
<name>DLTC_STACT</name>